<sequence length="168" mass="18623">MPLLDSFKVDHTRMHAPAVRVAKTMTTPKGDTITVFDLRFCIPNKEILPEKGIHTLEHLFAGFMRDHLNGAGVEIIDISPMGCRTGFYMSLIGTPSEQQVADAWLASMQDVLNVKDQSKIPELNEYQCGTYLMHSLAEAQQIAQNVLARKVAVNRNGDLALDESLLNA</sequence>
<comment type="function">
    <text evidence="1">Involved in the synthesis of autoinducer 2 (AI-2) which is secreted by bacteria and is used to communicate both the cell density and the metabolic potential of the environment. The regulation of gene expression in response to changes in cell density is called quorum sensing. Catalyzes the transformation of S-ribosylhomocysteine (RHC) to homocysteine (HC) and 4,5-dihydroxy-2,3-pentadione (DPD).</text>
</comment>
<comment type="catalytic activity">
    <reaction evidence="1">
        <text>S-(5-deoxy-D-ribos-5-yl)-L-homocysteine = (S)-4,5-dihydroxypentane-2,3-dione + L-homocysteine</text>
        <dbReference type="Rhea" id="RHEA:17753"/>
        <dbReference type="ChEBI" id="CHEBI:29484"/>
        <dbReference type="ChEBI" id="CHEBI:58195"/>
        <dbReference type="ChEBI" id="CHEBI:58199"/>
        <dbReference type="EC" id="4.4.1.21"/>
    </reaction>
</comment>
<comment type="cofactor">
    <cofactor evidence="1">
        <name>Fe cation</name>
        <dbReference type="ChEBI" id="CHEBI:24875"/>
    </cofactor>
    <text evidence="1">Binds 1 Fe cation per subunit.</text>
</comment>
<comment type="subunit">
    <text evidence="1">Homodimer.</text>
</comment>
<comment type="similarity">
    <text evidence="1">Belongs to the LuxS family.</text>
</comment>
<feature type="chain" id="PRO_1000093317" description="S-ribosylhomocysteine lyase">
    <location>
        <begin position="1"/>
        <end position="168"/>
    </location>
</feature>
<feature type="binding site" evidence="1">
    <location>
        <position position="54"/>
    </location>
    <ligand>
        <name>Fe cation</name>
        <dbReference type="ChEBI" id="CHEBI:24875"/>
    </ligand>
</feature>
<feature type="binding site" evidence="1">
    <location>
        <position position="58"/>
    </location>
    <ligand>
        <name>Fe cation</name>
        <dbReference type="ChEBI" id="CHEBI:24875"/>
    </ligand>
</feature>
<feature type="binding site" evidence="1">
    <location>
        <position position="128"/>
    </location>
    <ligand>
        <name>Fe cation</name>
        <dbReference type="ChEBI" id="CHEBI:24875"/>
    </ligand>
</feature>
<protein>
    <recommendedName>
        <fullName evidence="1">S-ribosylhomocysteine lyase</fullName>
        <ecNumber evidence="1">4.4.1.21</ecNumber>
    </recommendedName>
    <alternativeName>
        <fullName evidence="1">AI-2 synthesis protein</fullName>
    </alternativeName>
    <alternativeName>
        <fullName evidence="1">Autoinducer-2 production protein LuxS</fullName>
    </alternativeName>
</protein>
<gene>
    <name evidence="1" type="primary">luxS</name>
    <name type="ordered locus">NGK_2568</name>
</gene>
<keyword id="KW-0071">Autoinducer synthesis</keyword>
<keyword id="KW-0408">Iron</keyword>
<keyword id="KW-0456">Lyase</keyword>
<keyword id="KW-0479">Metal-binding</keyword>
<keyword id="KW-0673">Quorum sensing</keyword>
<organism>
    <name type="scientific">Neisseria gonorrhoeae (strain NCCP11945)</name>
    <dbReference type="NCBI Taxonomy" id="521006"/>
    <lineage>
        <taxon>Bacteria</taxon>
        <taxon>Pseudomonadati</taxon>
        <taxon>Pseudomonadota</taxon>
        <taxon>Betaproteobacteria</taxon>
        <taxon>Neisseriales</taxon>
        <taxon>Neisseriaceae</taxon>
        <taxon>Neisseria</taxon>
    </lineage>
</organism>
<name>LUXS_NEIG2</name>
<proteinExistence type="inferred from homology"/>
<evidence type="ECO:0000255" key="1">
    <source>
        <dbReference type="HAMAP-Rule" id="MF_00091"/>
    </source>
</evidence>
<dbReference type="EC" id="4.4.1.21" evidence="1"/>
<dbReference type="EMBL" id="CP001050">
    <property type="protein sequence ID" value="ACF31167.1"/>
    <property type="molecule type" value="Genomic_DNA"/>
</dbReference>
<dbReference type="RefSeq" id="WP_003687075.1">
    <property type="nucleotide sequence ID" value="NC_011035.1"/>
</dbReference>
<dbReference type="SMR" id="B4RRB0"/>
<dbReference type="GeneID" id="66754430"/>
<dbReference type="KEGG" id="ngk:NGK_2568"/>
<dbReference type="HOGENOM" id="CLU_107531_2_0_4"/>
<dbReference type="Proteomes" id="UP000002564">
    <property type="component" value="Chromosome"/>
</dbReference>
<dbReference type="GO" id="GO:0005506">
    <property type="term" value="F:iron ion binding"/>
    <property type="evidence" value="ECO:0007669"/>
    <property type="project" value="InterPro"/>
</dbReference>
<dbReference type="GO" id="GO:0043768">
    <property type="term" value="F:S-ribosylhomocysteine lyase activity"/>
    <property type="evidence" value="ECO:0007669"/>
    <property type="project" value="UniProtKB-UniRule"/>
</dbReference>
<dbReference type="GO" id="GO:0009372">
    <property type="term" value="P:quorum sensing"/>
    <property type="evidence" value="ECO:0007669"/>
    <property type="project" value="UniProtKB-UniRule"/>
</dbReference>
<dbReference type="FunFam" id="3.30.1360.80:FF:000001">
    <property type="entry name" value="S-ribosylhomocysteine lyase"/>
    <property type="match status" value="1"/>
</dbReference>
<dbReference type="Gene3D" id="3.30.1360.80">
    <property type="entry name" value="S-ribosylhomocysteinase (LuxS)"/>
    <property type="match status" value="1"/>
</dbReference>
<dbReference type="HAMAP" id="MF_00091">
    <property type="entry name" value="LuxS"/>
    <property type="match status" value="1"/>
</dbReference>
<dbReference type="InterPro" id="IPR037005">
    <property type="entry name" value="LuxS_sf"/>
</dbReference>
<dbReference type="InterPro" id="IPR011249">
    <property type="entry name" value="Metalloenz_LuxS/M16"/>
</dbReference>
<dbReference type="InterPro" id="IPR003815">
    <property type="entry name" value="S-ribosylhomocysteinase"/>
</dbReference>
<dbReference type="NCBIfam" id="NF002602">
    <property type="entry name" value="PRK02260.1-2"/>
    <property type="match status" value="1"/>
</dbReference>
<dbReference type="PANTHER" id="PTHR35799">
    <property type="entry name" value="S-RIBOSYLHOMOCYSTEINE LYASE"/>
    <property type="match status" value="1"/>
</dbReference>
<dbReference type="PANTHER" id="PTHR35799:SF1">
    <property type="entry name" value="S-RIBOSYLHOMOCYSTEINE LYASE"/>
    <property type="match status" value="1"/>
</dbReference>
<dbReference type="Pfam" id="PF02664">
    <property type="entry name" value="LuxS"/>
    <property type="match status" value="1"/>
</dbReference>
<dbReference type="PIRSF" id="PIRSF006160">
    <property type="entry name" value="AI2"/>
    <property type="match status" value="1"/>
</dbReference>
<dbReference type="PRINTS" id="PR01487">
    <property type="entry name" value="LUXSPROTEIN"/>
</dbReference>
<dbReference type="SUPFAM" id="SSF63411">
    <property type="entry name" value="LuxS/MPP-like metallohydrolase"/>
    <property type="match status" value="1"/>
</dbReference>
<reference key="1">
    <citation type="journal article" date="2008" name="J. Bacteriol.">
        <title>Complete genome sequence of Neisseria gonorrhoeae NCCP11945.</title>
        <authorList>
            <person name="Chung G.T."/>
            <person name="Yoo J.S."/>
            <person name="Oh H.B."/>
            <person name="Lee Y.S."/>
            <person name="Cha S.H."/>
            <person name="Kim S.J."/>
            <person name="Yoo C.K."/>
        </authorList>
    </citation>
    <scope>NUCLEOTIDE SEQUENCE [LARGE SCALE GENOMIC DNA]</scope>
    <source>
        <strain>NCCP11945</strain>
    </source>
</reference>
<accession>B4RRB0</accession>